<comment type="function">
    <text>Stereospecific condensation of phosphoenolpyruvate (PEP) and D-erythrose-4-phosphate (E4P) giving rise to 3-deoxy-D-arabino-heptulosonate-7-phosphate (DAHP).</text>
</comment>
<comment type="catalytic activity">
    <reaction>
        <text>D-erythrose 4-phosphate + phosphoenolpyruvate + H2O = 7-phospho-2-dehydro-3-deoxy-D-arabino-heptonate + phosphate</text>
        <dbReference type="Rhea" id="RHEA:14717"/>
        <dbReference type="ChEBI" id="CHEBI:15377"/>
        <dbReference type="ChEBI" id="CHEBI:16897"/>
        <dbReference type="ChEBI" id="CHEBI:43474"/>
        <dbReference type="ChEBI" id="CHEBI:58394"/>
        <dbReference type="ChEBI" id="CHEBI:58702"/>
        <dbReference type="EC" id="2.5.1.54"/>
    </reaction>
</comment>
<comment type="pathway">
    <text>Metabolic intermediate biosynthesis; chorismate biosynthesis; chorismate from D-erythrose 4-phosphate and phosphoenolpyruvate: step 1/7.</text>
</comment>
<comment type="similarity">
    <text evidence="1">Belongs to the class-I DAHP synthase family.</text>
</comment>
<name>AROF_SCHPO</name>
<protein>
    <recommendedName>
        <fullName>Putative phospho-2-dehydro-3-deoxyheptonate aldolase</fullName>
        <ecNumber>2.5.1.54</ecNumber>
    </recommendedName>
    <alternativeName>
        <fullName>3-deoxy-D-arabino-heptulosonate 7-phosphate synthase</fullName>
    </alternativeName>
    <alternativeName>
        <fullName>DAHP synthase</fullName>
    </alternativeName>
    <alternativeName>
        <fullName>Phospho-2-keto-3-deoxyheptonate aldolase</fullName>
    </alternativeName>
</protein>
<gene>
    <name type="ORF">SPAC24H6.10c</name>
</gene>
<organism>
    <name type="scientific">Schizosaccharomyces pombe (strain 972 / ATCC 24843)</name>
    <name type="common">Fission yeast</name>
    <dbReference type="NCBI Taxonomy" id="284812"/>
    <lineage>
        <taxon>Eukaryota</taxon>
        <taxon>Fungi</taxon>
        <taxon>Dikarya</taxon>
        <taxon>Ascomycota</taxon>
        <taxon>Taphrinomycotina</taxon>
        <taxon>Schizosaccharomycetes</taxon>
        <taxon>Schizosaccharomycetales</taxon>
        <taxon>Schizosaccharomycetaceae</taxon>
        <taxon>Schizosaccharomyces</taxon>
    </lineage>
</organism>
<dbReference type="EC" id="2.5.1.54"/>
<dbReference type="EMBL" id="CU329670">
    <property type="protein sequence ID" value="CAA90854.1"/>
    <property type="molecule type" value="Genomic_DNA"/>
</dbReference>
<dbReference type="PIR" id="S62412">
    <property type="entry name" value="S62412"/>
</dbReference>
<dbReference type="RefSeq" id="NP_592942.1">
    <property type="nucleotide sequence ID" value="NM_001018343.2"/>
</dbReference>
<dbReference type="SMR" id="Q09755"/>
<dbReference type="BioGRID" id="279085">
    <property type="interactions" value="6"/>
</dbReference>
<dbReference type="FunCoup" id="Q09755">
    <property type="interactions" value="419"/>
</dbReference>
<dbReference type="STRING" id="284812.Q09755"/>
<dbReference type="iPTMnet" id="Q09755"/>
<dbReference type="PaxDb" id="4896-SPAC24H6.10c.1"/>
<dbReference type="EnsemblFungi" id="SPAC24H6.10c.1">
    <property type="protein sequence ID" value="SPAC24H6.10c.1:pep"/>
    <property type="gene ID" value="SPAC24H6.10c"/>
</dbReference>
<dbReference type="KEGG" id="spo:2542631"/>
<dbReference type="PomBase" id="SPAC24H6.10c"/>
<dbReference type="VEuPathDB" id="FungiDB:SPAC24H6.10c"/>
<dbReference type="eggNOG" id="ENOG502QPSU">
    <property type="taxonomic scope" value="Eukaryota"/>
</dbReference>
<dbReference type="HOGENOM" id="CLU_030903_0_1_1"/>
<dbReference type="InParanoid" id="Q09755"/>
<dbReference type="OMA" id="PQYYAEL"/>
<dbReference type="PhylomeDB" id="Q09755"/>
<dbReference type="UniPathway" id="UPA00053">
    <property type="reaction ID" value="UER00084"/>
</dbReference>
<dbReference type="PRO" id="PR:Q09755"/>
<dbReference type="Proteomes" id="UP000002485">
    <property type="component" value="Chromosome I"/>
</dbReference>
<dbReference type="GO" id="GO:0005737">
    <property type="term" value="C:cytoplasm"/>
    <property type="evidence" value="ECO:0000318"/>
    <property type="project" value="GO_Central"/>
</dbReference>
<dbReference type="GO" id="GO:0005829">
    <property type="term" value="C:cytosol"/>
    <property type="evidence" value="ECO:0007005"/>
    <property type="project" value="PomBase"/>
</dbReference>
<dbReference type="GO" id="GO:0005739">
    <property type="term" value="C:mitochondrion"/>
    <property type="evidence" value="ECO:0000266"/>
    <property type="project" value="PomBase"/>
</dbReference>
<dbReference type="GO" id="GO:0005634">
    <property type="term" value="C:nucleus"/>
    <property type="evidence" value="ECO:0007005"/>
    <property type="project" value="PomBase"/>
</dbReference>
<dbReference type="GO" id="GO:0003849">
    <property type="term" value="F:3-deoxy-7-phosphoheptulonate synthase activity"/>
    <property type="evidence" value="ECO:0000318"/>
    <property type="project" value="GO_Central"/>
</dbReference>
<dbReference type="GO" id="GO:0008652">
    <property type="term" value="P:amino acid biosynthetic process"/>
    <property type="evidence" value="ECO:0007669"/>
    <property type="project" value="UniProtKB-KW"/>
</dbReference>
<dbReference type="GO" id="GO:0009073">
    <property type="term" value="P:aromatic amino acid family biosynthetic process"/>
    <property type="evidence" value="ECO:0000318"/>
    <property type="project" value="GO_Central"/>
</dbReference>
<dbReference type="GO" id="GO:0009423">
    <property type="term" value="P:chorismate biosynthetic process"/>
    <property type="evidence" value="ECO:0007669"/>
    <property type="project" value="UniProtKB-UniPathway"/>
</dbReference>
<dbReference type="FunFam" id="3.20.20.70:FF:000005">
    <property type="entry name" value="Phospho-2-dehydro-3-deoxyheptonate aldolase"/>
    <property type="match status" value="1"/>
</dbReference>
<dbReference type="Gene3D" id="3.20.20.70">
    <property type="entry name" value="Aldolase class I"/>
    <property type="match status" value="1"/>
</dbReference>
<dbReference type="InterPro" id="IPR013785">
    <property type="entry name" value="Aldolase_TIM"/>
</dbReference>
<dbReference type="InterPro" id="IPR006218">
    <property type="entry name" value="DAHP1/KDSA"/>
</dbReference>
<dbReference type="InterPro" id="IPR006219">
    <property type="entry name" value="DAHP_synth_1"/>
</dbReference>
<dbReference type="NCBIfam" id="TIGR00034">
    <property type="entry name" value="aroFGH"/>
    <property type="match status" value="1"/>
</dbReference>
<dbReference type="NCBIfam" id="NF009395">
    <property type="entry name" value="PRK12755.1"/>
    <property type="match status" value="1"/>
</dbReference>
<dbReference type="PANTHER" id="PTHR21225">
    <property type="entry name" value="PHOSPHO-2-DEHYDRO-3-DEOXYHEPTONATE ALDOLASE DAHP SYNTHETASE"/>
    <property type="match status" value="1"/>
</dbReference>
<dbReference type="PANTHER" id="PTHR21225:SF12">
    <property type="entry name" value="PHOSPHO-2-DEHYDRO-3-DEOXYHEPTONATE ALDOLASE, TYROSINE-INHIBITED"/>
    <property type="match status" value="1"/>
</dbReference>
<dbReference type="Pfam" id="PF00793">
    <property type="entry name" value="DAHP_synth_1"/>
    <property type="match status" value="1"/>
</dbReference>
<dbReference type="PIRSF" id="PIRSF001361">
    <property type="entry name" value="DAHP_synthase"/>
    <property type="match status" value="1"/>
</dbReference>
<dbReference type="SUPFAM" id="SSF51569">
    <property type="entry name" value="Aldolase"/>
    <property type="match status" value="1"/>
</dbReference>
<keyword id="KW-0028">Amino-acid biosynthesis</keyword>
<keyword id="KW-0057">Aromatic amino acid biosynthesis</keyword>
<keyword id="KW-1185">Reference proteome</keyword>
<keyword id="KW-0808">Transferase</keyword>
<sequence length="368" mass="39760">MDKHTPLLPGDSVFSRCKTEDSRIKGYDPVISPALIQSELAASDETLAFVSDQRRQAADIIAGRDDRLLLIVGPCSLHDPVAAKEYAIRLQKEAIKHKKDLHIIMRAYLEKPRTTVGWKGLINDPDLDGSYNINKGIRVARRIFLELLETGVGIASEMLDTISPQYLADLICWGAIGARTTESQLHRELASGLSFPIGFKNATDGNIGIAIDAMNSSANPHHFLSVTKQGVVAIVTTTGNPDTHIILRGGKSGTNFDADSVAGAKAKLEECNKLPSIMIDCSHGNSSKNHKNQPKVAACIAEQVANGQKAITGVMIESHLNEGKQAIPEDDLSSMKYGVSVTDACIGWDDTTAVFEQLAAAVRSRRSH</sequence>
<accession>Q09755</accession>
<proteinExistence type="inferred from homology"/>
<evidence type="ECO:0000305" key="1"/>
<reference key="1">
    <citation type="journal article" date="2002" name="Nature">
        <title>The genome sequence of Schizosaccharomyces pombe.</title>
        <authorList>
            <person name="Wood V."/>
            <person name="Gwilliam R."/>
            <person name="Rajandream M.A."/>
            <person name="Lyne M.H."/>
            <person name="Lyne R."/>
            <person name="Stewart A."/>
            <person name="Sgouros J.G."/>
            <person name="Peat N."/>
            <person name="Hayles J."/>
            <person name="Baker S.G."/>
            <person name="Basham D."/>
            <person name="Bowman S."/>
            <person name="Brooks K."/>
            <person name="Brown D."/>
            <person name="Brown S."/>
            <person name="Chillingworth T."/>
            <person name="Churcher C.M."/>
            <person name="Collins M."/>
            <person name="Connor R."/>
            <person name="Cronin A."/>
            <person name="Davis P."/>
            <person name="Feltwell T."/>
            <person name="Fraser A."/>
            <person name="Gentles S."/>
            <person name="Goble A."/>
            <person name="Hamlin N."/>
            <person name="Harris D.E."/>
            <person name="Hidalgo J."/>
            <person name="Hodgson G."/>
            <person name="Holroyd S."/>
            <person name="Hornsby T."/>
            <person name="Howarth S."/>
            <person name="Huckle E.J."/>
            <person name="Hunt S."/>
            <person name="Jagels K."/>
            <person name="James K.D."/>
            <person name="Jones L."/>
            <person name="Jones M."/>
            <person name="Leather S."/>
            <person name="McDonald S."/>
            <person name="McLean J."/>
            <person name="Mooney P."/>
            <person name="Moule S."/>
            <person name="Mungall K.L."/>
            <person name="Murphy L.D."/>
            <person name="Niblett D."/>
            <person name="Odell C."/>
            <person name="Oliver K."/>
            <person name="O'Neil S."/>
            <person name="Pearson D."/>
            <person name="Quail M.A."/>
            <person name="Rabbinowitsch E."/>
            <person name="Rutherford K.M."/>
            <person name="Rutter S."/>
            <person name="Saunders D."/>
            <person name="Seeger K."/>
            <person name="Sharp S."/>
            <person name="Skelton J."/>
            <person name="Simmonds M.N."/>
            <person name="Squares R."/>
            <person name="Squares S."/>
            <person name="Stevens K."/>
            <person name="Taylor K."/>
            <person name="Taylor R.G."/>
            <person name="Tivey A."/>
            <person name="Walsh S.V."/>
            <person name="Warren T."/>
            <person name="Whitehead S."/>
            <person name="Woodward J.R."/>
            <person name="Volckaert G."/>
            <person name="Aert R."/>
            <person name="Robben J."/>
            <person name="Grymonprez B."/>
            <person name="Weltjens I."/>
            <person name="Vanstreels E."/>
            <person name="Rieger M."/>
            <person name="Schaefer M."/>
            <person name="Mueller-Auer S."/>
            <person name="Gabel C."/>
            <person name="Fuchs M."/>
            <person name="Duesterhoeft A."/>
            <person name="Fritzc C."/>
            <person name="Holzer E."/>
            <person name="Moestl D."/>
            <person name="Hilbert H."/>
            <person name="Borzym K."/>
            <person name="Langer I."/>
            <person name="Beck A."/>
            <person name="Lehrach H."/>
            <person name="Reinhardt R."/>
            <person name="Pohl T.M."/>
            <person name="Eger P."/>
            <person name="Zimmermann W."/>
            <person name="Wedler H."/>
            <person name="Wambutt R."/>
            <person name="Purnelle B."/>
            <person name="Goffeau A."/>
            <person name="Cadieu E."/>
            <person name="Dreano S."/>
            <person name="Gloux S."/>
            <person name="Lelaure V."/>
            <person name="Mottier S."/>
            <person name="Galibert F."/>
            <person name="Aves S.J."/>
            <person name="Xiang Z."/>
            <person name="Hunt C."/>
            <person name="Moore K."/>
            <person name="Hurst S.M."/>
            <person name="Lucas M."/>
            <person name="Rochet M."/>
            <person name="Gaillardin C."/>
            <person name="Tallada V.A."/>
            <person name="Garzon A."/>
            <person name="Thode G."/>
            <person name="Daga R.R."/>
            <person name="Cruzado L."/>
            <person name="Jimenez J."/>
            <person name="Sanchez M."/>
            <person name="del Rey F."/>
            <person name="Benito J."/>
            <person name="Dominguez A."/>
            <person name="Revuelta J.L."/>
            <person name="Moreno S."/>
            <person name="Armstrong J."/>
            <person name="Forsburg S.L."/>
            <person name="Cerutti L."/>
            <person name="Lowe T."/>
            <person name="McCombie W.R."/>
            <person name="Paulsen I."/>
            <person name="Potashkin J."/>
            <person name="Shpakovski G.V."/>
            <person name="Ussery D."/>
            <person name="Barrell B.G."/>
            <person name="Nurse P."/>
        </authorList>
    </citation>
    <scope>NUCLEOTIDE SEQUENCE [LARGE SCALE GENOMIC DNA]</scope>
    <source>
        <strain>972 / ATCC 24843</strain>
    </source>
</reference>
<feature type="chain" id="PRO_0000140852" description="Putative phospho-2-dehydro-3-deoxyheptonate aldolase">
    <location>
        <begin position="1"/>
        <end position="368"/>
    </location>
</feature>